<protein>
    <recommendedName>
        <fullName>Histone-lysine N-methyltransferase SET5</fullName>
        <ecNumber evidence="1">2.1.1.-</ecNumber>
    </recommendedName>
    <alternativeName>
        <fullName>SET domain-containing protein 5</fullName>
    </alternativeName>
</protein>
<dbReference type="EC" id="2.1.1.-" evidence="1"/>
<dbReference type="EMBL" id="CR380952">
    <property type="protein sequence ID" value="CAG59288.1"/>
    <property type="molecule type" value="Genomic_DNA"/>
</dbReference>
<dbReference type="RefSeq" id="XP_446364.1">
    <property type="nucleotide sequence ID" value="XM_446364.1"/>
</dbReference>
<dbReference type="FunCoup" id="Q6FTT0">
    <property type="interactions" value="728"/>
</dbReference>
<dbReference type="STRING" id="284593.Q6FTT0"/>
<dbReference type="EnsemblFungi" id="CAGL0F09119g-T">
    <property type="protein sequence ID" value="CAGL0F09119g-T-p1"/>
    <property type="gene ID" value="CAGL0F09119g"/>
</dbReference>
<dbReference type="KEGG" id="cgr:2887694"/>
<dbReference type="CGD" id="CAL0129802">
    <property type="gene designation" value="SET5"/>
</dbReference>
<dbReference type="VEuPathDB" id="FungiDB:B1J91_F09119g"/>
<dbReference type="VEuPathDB" id="FungiDB:CAGL0F09119g"/>
<dbReference type="eggNOG" id="KOG2084">
    <property type="taxonomic scope" value="Eukaryota"/>
</dbReference>
<dbReference type="HOGENOM" id="CLU_031650_0_0_1"/>
<dbReference type="InParanoid" id="Q6FTT0"/>
<dbReference type="OMA" id="CEPNVRY"/>
<dbReference type="Proteomes" id="UP000002428">
    <property type="component" value="Chromosome F"/>
</dbReference>
<dbReference type="GO" id="GO:0000785">
    <property type="term" value="C:chromatin"/>
    <property type="evidence" value="ECO:0007669"/>
    <property type="project" value="EnsemblFungi"/>
</dbReference>
<dbReference type="GO" id="GO:0005737">
    <property type="term" value="C:cytoplasm"/>
    <property type="evidence" value="ECO:0007669"/>
    <property type="project" value="UniProtKB-SubCell"/>
</dbReference>
<dbReference type="GO" id="GO:0005634">
    <property type="term" value="C:nucleus"/>
    <property type="evidence" value="ECO:0007669"/>
    <property type="project" value="UniProtKB-SubCell"/>
</dbReference>
<dbReference type="GO" id="GO:0042799">
    <property type="term" value="F:histone H4K20 methyltransferase activity"/>
    <property type="evidence" value="ECO:0007669"/>
    <property type="project" value="TreeGrafter"/>
</dbReference>
<dbReference type="GO" id="GO:0032259">
    <property type="term" value="P:methylation"/>
    <property type="evidence" value="ECO:0007669"/>
    <property type="project" value="UniProtKB-KW"/>
</dbReference>
<dbReference type="GO" id="GO:0045814">
    <property type="term" value="P:negative regulation of gene expression, epigenetic"/>
    <property type="evidence" value="ECO:0007669"/>
    <property type="project" value="TreeGrafter"/>
</dbReference>
<dbReference type="GO" id="GO:0000723">
    <property type="term" value="P:telomere maintenance"/>
    <property type="evidence" value="ECO:0007669"/>
    <property type="project" value="EnsemblFungi"/>
</dbReference>
<dbReference type="CDD" id="cd08161">
    <property type="entry name" value="SET"/>
    <property type="match status" value="1"/>
</dbReference>
<dbReference type="CDD" id="cd20071">
    <property type="entry name" value="SET_SMYD"/>
    <property type="match status" value="1"/>
</dbReference>
<dbReference type="Gene3D" id="1.10.220.160">
    <property type="match status" value="1"/>
</dbReference>
<dbReference type="Gene3D" id="6.10.140.2220">
    <property type="match status" value="1"/>
</dbReference>
<dbReference type="Gene3D" id="2.170.270.10">
    <property type="entry name" value="SET domain"/>
    <property type="match status" value="1"/>
</dbReference>
<dbReference type="InterPro" id="IPR001214">
    <property type="entry name" value="SET_dom"/>
</dbReference>
<dbReference type="InterPro" id="IPR046341">
    <property type="entry name" value="SET_dom_sf"/>
</dbReference>
<dbReference type="PANTHER" id="PTHR46402:SF2">
    <property type="entry name" value="HISTONE-LYSINE N-TRIMETHYLTRANSFERASE SMYD5"/>
    <property type="match status" value="1"/>
</dbReference>
<dbReference type="PANTHER" id="PTHR46402">
    <property type="entry name" value="SET AND MYND DOMAIN-CONTAINING PROTEIN 5"/>
    <property type="match status" value="1"/>
</dbReference>
<dbReference type="Pfam" id="PF00856">
    <property type="entry name" value="SET"/>
    <property type="match status" value="1"/>
</dbReference>
<dbReference type="SMART" id="SM00317">
    <property type="entry name" value="SET"/>
    <property type="match status" value="1"/>
</dbReference>
<dbReference type="SUPFAM" id="SSF82199">
    <property type="entry name" value="SET domain"/>
    <property type="match status" value="1"/>
</dbReference>
<dbReference type="PROSITE" id="PS50280">
    <property type="entry name" value="SET"/>
    <property type="match status" value="1"/>
</dbReference>
<proteinExistence type="inferred from homology"/>
<organism>
    <name type="scientific">Candida glabrata (strain ATCC 2001 / BCRC 20586 / JCM 3761 / NBRC 0622 / NRRL Y-65 / CBS 138)</name>
    <name type="common">Yeast</name>
    <name type="synonym">Nakaseomyces glabratus</name>
    <dbReference type="NCBI Taxonomy" id="284593"/>
    <lineage>
        <taxon>Eukaryota</taxon>
        <taxon>Fungi</taxon>
        <taxon>Dikarya</taxon>
        <taxon>Ascomycota</taxon>
        <taxon>Saccharomycotina</taxon>
        <taxon>Saccharomycetes</taxon>
        <taxon>Saccharomycetales</taxon>
        <taxon>Saccharomycetaceae</taxon>
        <taxon>Nakaseomyces</taxon>
    </lineage>
</organism>
<evidence type="ECO:0000250" key="1">
    <source>
        <dbReference type="UniProtKB" id="P38890"/>
    </source>
</evidence>
<evidence type="ECO:0000255" key="2">
    <source>
        <dbReference type="PROSITE-ProRule" id="PRU00190"/>
    </source>
</evidence>
<evidence type="ECO:0000256" key="3">
    <source>
        <dbReference type="SAM" id="MobiDB-lite"/>
    </source>
</evidence>
<gene>
    <name type="primary">SET5</name>
    <name type="ordered locus">CAGL0F09119g</name>
</gene>
<sequence length="515" mass="58984">MSVSQLKIQTLTLNDSEPSLPGKPITPSKEQIRDDVVLLWKEEPAAEDLDLPHLYDKMKIRNTDWQFDINTLEDVLVSNNLYSVDDSQMDSYNDKIEFPDISEVMHLVNDKLPSKVEIRECEELRKGRGLYATRDIQQGELLFHEKVPIAMVPPMDKLKLIRSGKSCSMCGVSLSNSSHFTMLHGLDCNGCNSIWCSTNCKQKDITHPYLKHFGSKNKNIRPMDWNMFERHCQENIFVAAYSIGVIHAASLIDKAQSDEINQQFEALAKISQRVRYESSDSNNIGGTFDAEIGSLKEENPEPLWKKAFDLFIRTFPDTAEMGYEVFLEYLGRFHINQLSGQLYFLYSFLNHNCEPNVRYDINNKLELKVYARKFIKKDEELVTTYVNPLHGVSLRRRELRVNWGFICNCDRCAKEIELRKKNAVSIRETVLNSNSSSEVSLRSGLNVTSPIALQRSNGGSSSDLRRKSSIRNRKPDLKEMLKNSKEFELEAPAALGRNRSTSVRFDDIVSMAVEE</sequence>
<keyword id="KW-0158">Chromosome</keyword>
<keyword id="KW-0963">Cytoplasm</keyword>
<keyword id="KW-0489">Methyltransferase</keyword>
<keyword id="KW-0539">Nucleus</keyword>
<keyword id="KW-1185">Reference proteome</keyword>
<keyword id="KW-0949">S-adenosyl-L-methionine</keyword>
<keyword id="KW-0808">Transferase</keyword>
<reference key="1">
    <citation type="journal article" date="2004" name="Nature">
        <title>Genome evolution in yeasts.</title>
        <authorList>
            <person name="Dujon B."/>
            <person name="Sherman D."/>
            <person name="Fischer G."/>
            <person name="Durrens P."/>
            <person name="Casaregola S."/>
            <person name="Lafontaine I."/>
            <person name="de Montigny J."/>
            <person name="Marck C."/>
            <person name="Neuveglise C."/>
            <person name="Talla E."/>
            <person name="Goffard N."/>
            <person name="Frangeul L."/>
            <person name="Aigle M."/>
            <person name="Anthouard V."/>
            <person name="Babour A."/>
            <person name="Barbe V."/>
            <person name="Barnay S."/>
            <person name="Blanchin S."/>
            <person name="Beckerich J.-M."/>
            <person name="Beyne E."/>
            <person name="Bleykasten C."/>
            <person name="Boisrame A."/>
            <person name="Boyer J."/>
            <person name="Cattolico L."/>
            <person name="Confanioleri F."/>
            <person name="de Daruvar A."/>
            <person name="Despons L."/>
            <person name="Fabre E."/>
            <person name="Fairhead C."/>
            <person name="Ferry-Dumazet H."/>
            <person name="Groppi A."/>
            <person name="Hantraye F."/>
            <person name="Hennequin C."/>
            <person name="Jauniaux N."/>
            <person name="Joyet P."/>
            <person name="Kachouri R."/>
            <person name="Kerrest A."/>
            <person name="Koszul R."/>
            <person name="Lemaire M."/>
            <person name="Lesur I."/>
            <person name="Ma L."/>
            <person name="Muller H."/>
            <person name="Nicaud J.-M."/>
            <person name="Nikolski M."/>
            <person name="Oztas S."/>
            <person name="Ozier-Kalogeropoulos O."/>
            <person name="Pellenz S."/>
            <person name="Potier S."/>
            <person name="Richard G.-F."/>
            <person name="Straub M.-L."/>
            <person name="Suleau A."/>
            <person name="Swennen D."/>
            <person name="Tekaia F."/>
            <person name="Wesolowski-Louvel M."/>
            <person name="Westhof E."/>
            <person name="Wirth B."/>
            <person name="Zeniou-Meyer M."/>
            <person name="Zivanovic Y."/>
            <person name="Bolotin-Fukuhara M."/>
            <person name="Thierry A."/>
            <person name="Bouchier C."/>
            <person name="Caudron B."/>
            <person name="Scarpelli C."/>
            <person name="Gaillardin C."/>
            <person name="Weissenbach J."/>
            <person name="Wincker P."/>
            <person name="Souciet J.-L."/>
        </authorList>
    </citation>
    <scope>NUCLEOTIDE SEQUENCE [LARGE SCALE GENOMIC DNA]</scope>
    <source>
        <strain>ATCC 2001 / BCRC 20586 / JCM 3761 / NBRC 0622 / NRRL Y-65 / CBS 138</strain>
    </source>
</reference>
<feature type="chain" id="PRO_0000324466" description="Histone-lysine N-methyltransferase SET5">
    <location>
        <begin position="1"/>
        <end position="515"/>
    </location>
</feature>
<feature type="domain" description="SET" evidence="2">
    <location>
        <begin position="114"/>
        <end position="386"/>
    </location>
</feature>
<feature type="region of interest" description="Disordered" evidence="3">
    <location>
        <begin position="452"/>
        <end position="476"/>
    </location>
</feature>
<feature type="compositionally biased region" description="Polar residues" evidence="3">
    <location>
        <begin position="452"/>
        <end position="462"/>
    </location>
</feature>
<name>SET5_CANGA</name>
<accession>Q6FTT0</accession>
<comment type="function">
    <text evidence="1">Histone methyltransferase that monomethylates 'Lys-5', 'Lys-8' and 'Lys-12' of histone H4 (H4K5me1, H4K8me1 and H4K12me1, respectively), thereby controlling gene expression and remodeling chromatin structures.</text>
</comment>
<comment type="catalytic activity">
    <reaction evidence="1">
        <text>L-lysyl-[histone] + S-adenosyl-L-methionine = N(6)-methyl-L-lysyl-[histone] + S-adenosyl-L-homocysteine + H(+)</text>
        <dbReference type="Rhea" id="RHEA:10024"/>
        <dbReference type="Rhea" id="RHEA-COMP:9845"/>
        <dbReference type="Rhea" id="RHEA-COMP:9846"/>
        <dbReference type="ChEBI" id="CHEBI:15378"/>
        <dbReference type="ChEBI" id="CHEBI:29969"/>
        <dbReference type="ChEBI" id="CHEBI:57856"/>
        <dbReference type="ChEBI" id="CHEBI:59789"/>
        <dbReference type="ChEBI" id="CHEBI:61929"/>
    </reaction>
    <physiologicalReaction direction="left-to-right" evidence="1">
        <dbReference type="Rhea" id="RHEA:10025"/>
    </physiologicalReaction>
</comment>
<comment type="subcellular location">
    <subcellularLocation>
        <location evidence="1">Nucleus</location>
    </subcellularLocation>
    <subcellularLocation>
        <location evidence="1">Chromosome</location>
    </subcellularLocation>
    <subcellularLocation>
        <location evidence="1">Cytoplasm</location>
    </subcellularLocation>
</comment>
<comment type="similarity">
    <text evidence="2">Belongs to the class V-like SAM-binding methyltransferase superfamily. Histone-lysine methyltransferase family. SET5 subfamily.</text>
</comment>